<sequence>MKVNISIFGFGTVGRALAEIIAEKSRIFGVELNVISITDRSGTIWGDFDLLEAKEVKESTGKLSNIGDYEVYNFSPQELVEEVKPNILVDVSSWDEAHEMYKVALGEGISVVTSNKPPIANYYDELMNLAKENNAGIFFESTVMAGTPIIGVLRENLLGENIKRIDAVVNASTTFILTKMSEGKTLDDAIEEAKSLGILEEDPSKDIDGIDAYYKAKILHWVSYGEPPEEEERLGIREVRDARNVRLVAQVSKGKISVKPRKLSSDNPLLVEGVQNAAVIRTNNLGEVILKGPGGGGRVTASGVFTDIIKATLKFPNLR</sequence>
<accession>O58802</accession>
<proteinExistence type="evidence at protein level"/>
<organism evidence="9">
    <name type="scientific">Pyrococcus horikoshii (strain ATCC 700860 / DSM 12428 / JCM 9974 / NBRC 100139 / OT-3)</name>
    <dbReference type="NCBI Taxonomy" id="70601"/>
    <lineage>
        <taxon>Archaea</taxon>
        <taxon>Methanobacteriati</taxon>
        <taxon>Methanobacteriota</taxon>
        <taxon>Thermococci</taxon>
        <taxon>Thermococcales</taxon>
        <taxon>Thermococcaceae</taxon>
        <taxon>Pyrococcus</taxon>
    </lineage>
</organism>
<gene>
    <name evidence="8" type="ordered locus">PH1075</name>
</gene>
<name>DHOM_PYRHO</name>
<evidence type="ECO:0000250" key="1">
    <source>
        <dbReference type="UniProtKB" id="F9VNG5"/>
    </source>
</evidence>
<evidence type="ECO:0000250" key="2">
    <source>
        <dbReference type="UniProtKB" id="P31116"/>
    </source>
</evidence>
<evidence type="ECO:0000255" key="3">
    <source>
        <dbReference type="PIRSR" id="PIRSR036497-1"/>
    </source>
</evidence>
<evidence type="ECO:0000269" key="4">
    <source>
    </source>
</evidence>
<evidence type="ECO:0000303" key="5">
    <source>
    </source>
</evidence>
<evidence type="ECO:0000305" key="6"/>
<evidence type="ECO:0000305" key="7">
    <source>
    </source>
</evidence>
<evidence type="ECO:0000312" key="8">
    <source>
        <dbReference type="EMBL" id="BAA30174.1"/>
    </source>
</evidence>
<evidence type="ECO:0000312" key="9">
    <source>
        <dbReference type="Proteomes" id="UP000000752"/>
    </source>
</evidence>
<evidence type="ECO:0007744" key="10">
    <source>
        <dbReference type="PDB" id="4XB1"/>
    </source>
</evidence>
<evidence type="ECO:0007744" key="11">
    <source>
        <dbReference type="PDB" id="4XB2"/>
    </source>
</evidence>
<evidence type="ECO:0007829" key="12">
    <source>
        <dbReference type="PDB" id="4XB1"/>
    </source>
</evidence>
<dbReference type="EC" id="1.1.1.3" evidence="4"/>
<dbReference type="EMBL" id="BA000001">
    <property type="protein sequence ID" value="BAA30174.1"/>
    <property type="molecule type" value="Genomic_DNA"/>
</dbReference>
<dbReference type="PIR" id="H71101">
    <property type="entry name" value="H71101"/>
</dbReference>
<dbReference type="RefSeq" id="WP_010885161.1">
    <property type="nucleotide sequence ID" value="NC_000961.1"/>
</dbReference>
<dbReference type="PDB" id="4XB1">
    <property type="method" value="X-ray"/>
    <property type="resolution" value="2.30 A"/>
    <property type="chains" value="A/B=1-319"/>
</dbReference>
<dbReference type="PDB" id="4XB2">
    <property type="method" value="X-ray"/>
    <property type="resolution" value="2.43 A"/>
    <property type="chains" value="A/B=1-319"/>
</dbReference>
<dbReference type="PDBsum" id="4XB1"/>
<dbReference type="PDBsum" id="4XB2"/>
<dbReference type="SMR" id="O58802"/>
<dbReference type="STRING" id="70601.gene:9378034"/>
<dbReference type="EnsemblBacteria" id="BAA30174">
    <property type="protein sequence ID" value="BAA30174"/>
    <property type="gene ID" value="BAA30174"/>
</dbReference>
<dbReference type="GeneID" id="1443396"/>
<dbReference type="KEGG" id="pho:PH1075"/>
<dbReference type="eggNOG" id="arCOG01351">
    <property type="taxonomic scope" value="Archaea"/>
</dbReference>
<dbReference type="OrthoDB" id="4488at2157"/>
<dbReference type="BRENDA" id="1.1.1.3">
    <property type="organism ID" value="5244"/>
</dbReference>
<dbReference type="UniPathway" id="UPA00050">
    <property type="reaction ID" value="UER00063"/>
</dbReference>
<dbReference type="UniPathway" id="UPA00051">
    <property type="reaction ID" value="UER00465"/>
</dbReference>
<dbReference type="EvolutionaryTrace" id="O58802"/>
<dbReference type="Proteomes" id="UP000000752">
    <property type="component" value="Chromosome"/>
</dbReference>
<dbReference type="GO" id="GO:0004412">
    <property type="term" value="F:homoserine dehydrogenase activity"/>
    <property type="evidence" value="ECO:0000314"/>
    <property type="project" value="UniProtKB"/>
</dbReference>
<dbReference type="GO" id="GO:0046872">
    <property type="term" value="F:metal ion binding"/>
    <property type="evidence" value="ECO:0007669"/>
    <property type="project" value="UniProtKB-KW"/>
</dbReference>
<dbReference type="GO" id="GO:0070403">
    <property type="term" value="F:NAD+ binding"/>
    <property type="evidence" value="ECO:0000250"/>
    <property type="project" value="UniProtKB"/>
</dbReference>
<dbReference type="GO" id="GO:0050661">
    <property type="term" value="F:NADP binding"/>
    <property type="evidence" value="ECO:0007669"/>
    <property type="project" value="InterPro"/>
</dbReference>
<dbReference type="GO" id="GO:0009086">
    <property type="term" value="P:methionine biosynthetic process"/>
    <property type="evidence" value="ECO:0000314"/>
    <property type="project" value="UniProtKB"/>
</dbReference>
<dbReference type="GO" id="GO:0009088">
    <property type="term" value="P:threonine biosynthetic process"/>
    <property type="evidence" value="ECO:0000314"/>
    <property type="project" value="UniProtKB"/>
</dbReference>
<dbReference type="Gene3D" id="3.30.360.10">
    <property type="entry name" value="Dihydrodipicolinate Reductase, domain 2"/>
    <property type="match status" value="1"/>
</dbReference>
<dbReference type="Gene3D" id="3.40.50.720">
    <property type="entry name" value="NAD(P)-binding Rossmann-like Domain"/>
    <property type="match status" value="1"/>
</dbReference>
<dbReference type="InterPro" id="IPR005106">
    <property type="entry name" value="Asp/hSer_DH_NAD-bd"/>
</dbReference>
<dbReference type="InterPro" id="IPR001342">
    <property type="entry name" value="HDH_cat"/>
</dbReference>
<dbReference type="InterPro" id="IPR022697">
    <property type="entry name" value="HDH_short"/>
</dbReference>
<dbReference type="InterPro" id="IPR036291">
    <property type="entry name" value="NAD(P)-bd_dom_sf"/>
</dbReference>
<dbReference type="NCBIfam" id="NF006235">
    <property type="entry name" value="PRK08374.1"/>
    <property type="match status" value="1"/>
</dbReference>
<dbReference type="PANTHER" id="PTHR43331">
    <property type="entry name" value="HOMOSERINE DEHYDROGENASE"/>
    <property type="match status" value="1"/>
</dbReference>
<dbReference type="PANTHER" id="PTHR43331:SF1">
    <property type="entry name" value="HOMOSERINE DEHYDROGENASE"/>
    <property type="match status" value="1"/>
</dbReference>
<dbReference type="Pfam" id="PF00742">
    <property type="entry name" value="Homoserine_dh"/>
    <property type="match status" value="1"/>
</dbReference>
<dbReference type="Pfam" id="PF03447">
    <property type="entry name" value="NAD_binding_3"/>
    <property type="match status" value="1"/>
</dbReference>
<dbReference type="PIRSF" id="PIRSF036497">
    <property type="entry name" value="HDH_short"/>
    <property type="match status" value="1"/>
</dbReference>
<dbReference type="SUPFAM" id="SSF55347">
    <property type="entry name" value="Glyceraldehyde-3-phosphate dehydrogenase-like, C-terminal domain"/>
    <property type="match status" value="1"/>
</dbReference>
<dbReference type="SUPFAM" id="SSF51735">
    <property type="entry name" value="NAD(P)-binding Rossmann-fold domains"/>
    <property type="match status" value="1"/>
</dbReference>
<feature type="chain" id="PRO_0000460558" description="Homoserine dehydrogenase">
    <location>
        <begin position="1"/>
        <end position="319"/>
    </location>
</feature>
<feature type="active site" description="Proton donor" evidence="3">
    <location>
        <position position="215"/>
    </location>
</feature>
<feature type="binding site" evidence="4 10 11">
    <location>
        <position position="10"/>
    </location>
    <ligand>
        <name>NADPH</name>
        <dbReference type="ChEBI" id="CHEBI:57783"/>
    </ligand>
</feature>
<feature type="binding site" evidence="4 10 11">
    <location>
        <position position="12"/>
    </location>
    <ligand>
        <name>NADPH</name>
        <dbReference type="ChEBI" id="CHEBI:57783"/>
    </ligand>
</feature>
<feature type="binding site" evidence="2">
    <location>
        <position position="13"/>
    </location>
    <ligand>
        <name>NAD(+)</name>
        <dbReference type="ChEBI" id="CHEBI:57540"/>
    </ligand>
</feature>
<feature type="binding site" evidence="1">
    <location>
        <position position="13"/>
    </location>
    <ligand>
        <name>NADP(+)</name>
        <dbReference type="ChEBI" id="CHEBI:58349"/>
    </ligand>
</feature>
<feature type="binding site" evidence="4 10 11">
    <location>
        <position position="13"/>
    </location>
    <ligand>
        <name>NADPH</name>
        <dbReference type="ChEBI" id="CHEBI:57783"/>
    </ligand>
</feature>
<feature type="binding site" evidence="1">
    <location>
        <position position="40"/>
    </location>
    <ligand>
        <name>NADP(+)</name>
        <dbReference type="ChEBI" id="CHEBI:58349"/>
    </ligand>
</feature>
<feature type="binding site" evidence="4 10 11">
    <location>
        <position position="40"/>
    </location>
    <ligand>
        <name>NADPH</name>
        <dbReference type="ChEBI" id="CHEBI:57783"/>
    </ligand>
</feature>
<feature type="binding site" evidence="4 10">
    <location>
        <position position="57"/>
    </location>
    <ligand>
        <name>NADPH</name>
        <dbReference type="ChEBI" id="CHEBI:57783"/>
    </ligand>
</feature>
<feature type="binding site" evidence="2">
    <location>
        <position position="92"/>
    </location>
    <ligand>
        <name>NAD(+)</name>
        <dbReference type="ChEBI" id="CHEBI:57540"/>
    </ligand>
</feature>
<feature type="binding site" evidence="1">
    <location>
        <position position="92"/>
    </location>
    <ligand>
        <name>NADP(+)</name>
        <dbReference type="ChEBI" id="CHEBI:58349"/>
    </ligand>
</feature>
<feature type="binding site" evidence="4 10 11">
    <location>
        <position position="92"/>
    </location>
    <ligand>
        <name>NADPH</name>
        <dbReference type="ChEBI" id="CHEBI:57783"/>
    </ligand>
</feature>
<feature type="binding site" evidence="4 10 11">
    <location>
        <position position="93"/>
    </location>
    <ligand>
        <name>NADPH</name>
        <dbReference type="ChEBI" id="CHEBI:57783"/>
    </ligand>
</feature>
<feature type="binding site" evidence="1">
    <location>
        <position position="114"/>
    </location>
    <ligand>
        <name>NADP(+)</name>
        <dbReference type="ChEBI" id="CHEBI:58349"/>
    </ligand>
</feature>
<feature type="binding site" evidence="4 10 11">
    <location>
        <position position="114"/>
    </location>
    <ligand>
        <name>NADPH</name>
        <dbReference type="ChEBI" id="CHEBI:57783"/>
    </ligand>
</feature>
<feature type="binding site" evidence="1">
    <location>
        <position position="116"/>
    </location>
    <ligand>
        <name>NADP(+)</name>
        <dbReference type="ChEBI" id="CHEBI:58349"/>
    </ligand>
</feature>
<feature type="binding site" evidence="4 10 11">
    <location>
        <position position="116"/>
    </location>
    <ligand>
        <name>NADPH</name>
        <dbReference type="ChEBI" id="CHEBI:57783"/>
    </ligand>
</feature>
<feature type="binding site" evidence="4 10 11">
    <location>
        <position position="140"/>
    </location>
    <ligand>
        <name>Na(+)</name>
        <dbReference type="ChEBI" id="CHEBI:29101"/>
    </ligand>
</feature>
<feature type="binding site" evidence="4 10 11">
    <location>
        <position position="143"/>
    </location>
    <ligand>
        <name>Na(+)</name>
        <dbReference type="ChEBI" id="CHEBI:29101"/>
    </ligand>
</feature>
<feature type="binding site" evidence="4 10 11">
    <location>
        <position position="145"/>
    </location>
    <ligand>
        <name>Na(+)</name>
        <dbReference type="ChEBI" id="CHEBI:29101"/>
    </ligand>
</feature>
<feature type="binding site" evidence="4 10 11">
    <location>
        <position position="147"/>
    </location>
    <ligand>
        <name>Na(+)</name>
        <dbReference type="ChEBI" id="CHEBI:29101"/>
    </ligand>
</feature>
<feature type="binding site" evidence="1">
    <location>
        <position position="197"/>
    </location>
    <ligand>
        <name>NADP(+)</name>
        <dbReference type="ChEBI" id="CHEBI:58349"/>
    </ligand>
</feature>
<feature type="binding site" evidence="2">
    <location>
        <position position="200"/>
    </location>
    <ligand>
        <name>L-homoserine</name>
        <dbReference type="ChEBI" id="CHEBI:57476"/>
    </ligand>
</feature>
<feature type="binding site" evidence="1">
    <location>
        <position position="200"/>
    </location>
    <ligand>
        <name>NADP(+)</name>
        <dbReference type="ChEBI" id="CHEBI:58349"/>
    </ligand>
</feature>
<feature type="binding site" evidence="2">
    <location>
        <position position="211"/>
    </location>
    <ligand>
        <name>L-homoserine</name>
        <dbReference type="ChEBI" id="CHEBI:57476"/>
    </ligand>
</feature>
<feature type="binding site" evidence="2">
    <location>
        <position position="296"/>
    </location>
    <ligand>
        <name>NAD(+)</name>
        <dbReference type="ChEBI" id="CHEBI:57540"/>
    </ligand>
</feature>
<feature type="binding site" evidence="1">
    <location>
        <position position="296"/>
    </location>
    <ligand>
        <name>NADP(+)</name>
        <dbReference type="ChEBI" id="CHEBI:58349"/>
    </ligand>
</feature>
<feature type="binding site" evidence="4 10 11">
    <location>
        <position position="296"/>
    </location>
    <ligand>
        <name>NADPH</name>
        <dbReference type="ChEBI" id="CHEBI:57783"/>
    </ligand>
</feature>
<feature type="mutagenesis site" description="Increases activity with NADP." evidence="4">
    <original>R</original>
    <variation>A</variation>
    <location>
        <position position="40"/>
    </location>
</feature>
<feature type="mutagenesis site" description="Increases activity with NADP." evidence="4">
    <original>K</original>
    <variation>A</variation>
    <location>
        <position position="57"/>
    </location>
</feature>
<feature type="strand" evidence="12">
    <location>
        <begin position="2"/>
        <end position="8"/>
    </location>
</feature>
<feature type="helix" evidence="12">
    <location>
        <begin position="12"/>
        <end position="24"/>
    </location>
</feature>
<feature type="strand" evidence="12">
    <location>
        <begin position="25"/>
        <end position="27"/>
    </location>
</feature>
<feature type="strand" evidence="12">
    <location>
        <begin position="30"/>
        <end position="39"/>
    </location>
</feature>
<feature type="strand" evidence="12">
    <location>
        <begin position="42"/>
        <end position="47"/>
    </location>
</feature>
<feature type="helix" evidence="12">
    <location>
        <begin position="50"/>
        <end position="60"/>
    </location>
</feature>
<feature type="helix" evidence="12">
    <location>
        <begin position="63"/>
        <end position="65"/>
    </location>
</feature>
<feature type="helix" evidence="12">
    <location>
        <begin position="76"/>
        <end position="83"/>
    </location>
</feature>
<feature type="strand" evidence="12">
    <location>
        <begin position="86"/>
        <end position="90"/>
    </location>
</feature>
<feature type="turn" evidence="12">
    <location>
        <begin position="95"/>
        <end position="97"/>
    </location>
</feature>
<feature type="helix" evidence="12">
    <location>
        <begin position="98"/>
        <end position="106"/>
    </location>
</feature>
<feature type="strand" evidence="12">
    <location>
        <begin position="110"/>
        <end position="113"/>
    </location>
</feature>
<feature type="helix" evidence="12">
    <location>
        <begin position="116"/>
        <end position="132"/>
    </location>
</feature>
<feature type="helix" evidence="12">
    <location>
        <begin position="140"/>
        <end position="142"/>
    </location>
</feature>
<feature type="helix" evidence="12">
    <location>
        <begin position="149"/>
        <end position="155"/>
    </location>
</feature>
<feature type="strand" evidence="12">
    <location>
        <begin position="162"/>
        <end position="168"/>
    </location>
</feature>
<feature type="helix" evidence="12">
    <location>
        <begin position="171"/>
        <end position="181"/>
    </location>
</feature>
<feature type="helix" evidence="12">
    <location>
        <begin position="186"/>
        <end position="195"/>
    </location>
</feature>
<feature type="helix" evidence="12">
    <location>
        <begin position="204"/>
        <end position="207"/>
    </location>
</feature>
<feature type="helix" evidence="12">
    <location>
        <begin position="210"/>
        <end position="224"/>
    </location>
</feature>
<feature type="strand" evidence="12">
    <location>
        <begin position="229"/>
        <end position="233"/>
    </location>
</feature>
<feature type="strand" evidence="12">
    <location>
        <begin position="245"/>
        <end position="252"/>
    </location>
</feature>
<feature type="strand" evidence="12">
    <location>
        <begin position="255"/>
        <end position="262"/>
    </location>
</feature>
<feature type="strand" evidence="12">
    <location>
        <begin position="275"/>
        <end position="282"/>
    </location>
</feature>
<feature type="turn" evidence="12">
    <location>
        <begin position="283"/>
        <end position="285"/>
    </location>
</feature>
<feature type="strand" evidence="12">
    <location>
        <begin position="286"/>
        <end position="293"/>
    </location>
</feature>
<feature type="helix" evidence="12">
    <location>
        <begin position="297"/>
        <end position="312"/>
    </location>
</feature>
<protein>
    <recommendedName>
        <fullName>Homoserine dehydrogenase</fullName>
        <shortName>HDH</shortName>
        <shortName>HSD</shortName>
        <shortName evidence="5">HseDH</shortName>
        <ecNumber evidence="4">1.1.1.3</ecNumber>
    </recommendedName>
</protein>
<comment type="function">
    <text evidence="4">Catalyzes the conversion of L-aspartate-beta-semialdehyde (L-Asa) to L-homoserine (L-Hse), the third step in the biosynthesis of threonine and methionine from aspartate (PubMed:26154028). Utilizes NADH but not NADPH as coenzyme (PubMed:26154028).</text>
</comment>
<comment type="catalytic activity">
    <reaction evidence="4">
        <text>L-homoserine + NAD(+) = L-aspartate 4-semialdehyde + NADH + H(+)</text>
        <dbReference type="Rhea" id="RHEA:15757"/>
        <dbReference type="ChEBI" id="CHEBI:15378"/>
        <dbReference type="ChEBI" id="CHEBI:57476"/>
        <dbReference type="ChEBI" id="CHEBI:57540"/>
        <dbReference type="ChEBI" id="CHEBI:57945"/>
        <dbReference type="ChEBI" id="CHEBI:537519"/>
        <dbReference type="EC" id="1.1.1.3"/>
    </reaction>
    <physiologicalReaction direction="right-to-left" evidence="4">
        <dbReference type="Rhea" id="RHEA:15759"/>
    </physiologicalReaction>
</comment>
<comment type="cofactor">
    <cofactor evidence="2">
        <name>a metal cation</name>
        <dbReference type="ChEBI" id="CHEBI:25213"/>
    </cofactor>
    <text evidence="2">A sodium ion is seen in the structure; a metal ion may subtly affect the relative position of the nucleotide-binding region to influence enzyme activity, and could increase the stability of the enzyme.</text>
</comment>
<comment type="biophysicochemical properties">
    <kinetics>
        <KM>0.32 mM for NAD (at pH 11 and at 50 degrees Celsius).</KM>
    </kinetics>
</comment>
<comment type="pathway">
    <text evidence="7">Amino-acid biosynthesis; L-methionine biosynthesis via de novo pathway; L-homoserine from L-aspartate: step 3/3.</text>
</comment>
<comment type="pathway">
    <text evidence="7">Amino-acid biosynthesis; L-threonine biosynthesis; L-threonine from L-aspartate: step 3/5.</text>
</comment>
<comment type="subunit">
    <text evidence="4">Homodimer.</text>
</comment>
<comment type="similarity">
    <text evidence="6">Belongs to the homoserine dehydrogenase family.</text>
</comment>
<reference evidence="9" key="1">
    <citation type="journal article" date="1998" name="DNA Res.">
        <title>Complete sequence and gene organization of the genome of a hyper-thermophilic archaebacterium, Pyrococcus horikoshii OT3.</title>
        <authorList>
            <person name="Kawarabayasi Y."/>
            <person name="Sawada M."/>
            <person name="Horikawa H."/>
            <person name="Haikawa Y."/>
            <person name="Hino Y."/>
            <person name="Yamamoto S."/>
            <person name="Sekine M."/>
            <person name="Baba S."/>
            <person name="Kosugi H."/>
            <person name="Hosoyama A."/>
            <person name="Nagai Y."/>
            <person name="Sakai M."/>
            <person name="Ogura K."/>
            <person name="Otsuka R."/>
            <person name="Nakazawa H."/>
            <person name="Takamiya M."/>
            <person name="Ohfuku Y."/>
            <person name="Funahashi T."/>
            <person name="Tanaka T."/>
            <person name="Kudoh Y."/>
            <person name="Yamazaki J."/>
            <person name="Kushida N."/>
            <person name="Oguchi A."/>
            <person name="Aoki K."/>
            <person name="Yoshizawa T."/>
            <person name="Nakamura Y."/>
            <person name="Robb F.T."/>
            <person name="Horikoshi K."/>
            <person name="Masuchi Y."/>
            <person name="Shizuya H."/>
            <person name="Kikuchi H."/>
        </authorList>
    </citation>
    <scope>NUCLEOTIDE SEQUENCE [LARGE SCALE GENOMIC DNA]</scope>
    <source>
        <strain evidence="9">ATCC 700860 / DSM 12428 / JCM 9974 / NBRC 100139 / OT-3</strain>
    </source>
</reference>
<reference evidence="10 11" key="2">
    <citation type="journal article" date="2015" name="Sci. Rep.">
        <title>Crystal Structures of a Hyperthermophilic Archaeal Homoserine Dehydrogenase Suggest a Novel Cofactor Binding Mode for Oxidoreductases.</title>
        <authorList>
            <person name="Hayashi J."/>
            <person name="Inoue S."/>
            <person name="Kim K."/>
            <person name="Yoneda K."/>
            <person name="Kawarabayasi Y."/>
            <person name="Ohshima T."/>
            <person name="Sakuraba H."/>
        </authorList>
    </citation>
    <scope>X-RAY CRYSTALLOGRAPHY (2.30 ANGSTROMS) IN COMPLEX WITH NADPH AND SODIUM</scope>
    <scope>FUNCTION</scope>
    <scope>CATALYTIC ACTIVITY</scope>
    <scope>BIOPHYSICOCHEMICAL PROPERTIES</scope>
    <scope>SUBUNIT</scope>
    <scope>MUTAGENESIS OF ARG-40 AND LYS-57</scope>
</reference>
<keyword id="KW-0002">3D-structure</keyword>
<keyword id="KW-0028">Amino-acid biosynthesis</keyword>
<keyword id="KW-0479">Metal-binding</keyword>
<keyword id="KW-0486">Methionine biosynthesis</keyword>
<keyword id="KW-0520">NAD</keyword>
<keyword id="KW-0521">NADP</keyword>
<keyword id="KW-0547">Nucleotide-binding</keyword>
<keyword id="KW-0560">Oxidoreductase</keyword>
<keyword id="KW-0915">Sodium</keyword>
<keyword id="KW-0791">Threonine biosynthesis</keyword>